<name>HOA_BREBN</name>
<dbReference type="EC" id="4.1.3.39" evidence="1"/>
<dbReference type="EMBL" id="AP008955">
    <property type="protein sequence ID" value="BAH43955.1"/>
    <property type="molecule type" value="Genomic_DNA"/>
</dbReference>
<dbReference type="RefSeq" id="WP_015891273.1">
    <property type="nucleotide sequence ID" value="NC_012491.1"/>
</dbReference>
<dbReference type="SMR" id="C0ZDU6"/>
<dbReference type="STRING" id="358681.BBR47_29780"/>
<dbReference type="KEGG" id="bbe:BBR47_29780"/>
<dbReference type="eggNOG" id="COG0119">
    <property type="taxonomic scope" value="Bacteria"/>
</dbReference>
<dbReference type="HOGENOM" id="CLU_049173_0_0_9"/>
<dbReference type="Proteomes" id="UP000001877">
    <property type="component" value="Chromosome"/>
</dbReference>
<dbReference type="GO" id="GO:0003852">
    <property type="term" value="F:2-isopropylmalate synthase activity"/>
    <property type="evidence" value="ECO:0007669"/>
    <property type="project" value="TreeGrafter"/>
</dbReference>
<dbReference type="GO" id="GO:0008701">
    <property type="term" value="F:4-hydroxy-2-oxovalerate aldolase activity"/>
    <property type="evidence" value="ECO:0007669"/>
    <property type="project" value="UniProtKB-UniRule"/>
</dbReference>
<dbReference type="GO" id="GO:0030145">
    <property type="term" value="F:manganese ion binding"/>
    <property type="evidence" value="ECO:0007669"/>
    <property type="project" value="UniProtKB-UniRule"/>
</dbReference>
<dbReference type="GO" id="GO:0009056">
    <property type="term" value="P:catabolic process"/>
    <property type="evidence" value="ECO:0007669"/>
    <property type="project" value="UniProtKB-KW"/>
</dbReference>
<dbReference type="GO" id="GO:0009098">
    <property type="term" value="P:L-leucine biosynthetic process"/>
    <property type="evidence" value="ECO:0007669"/>
    <property type="project" value="TreeGrafter"/>
</dbReference>
<dbReference type="CDD" id="cd07943">
    <property type="entry name" value="DRE_TIM_HOA"/>
    <property type="match status" value="1"/>
</dbReference>
<dbReference type="Gene3D" id="1.10.8.60">
    <property type="match status" value="1"/>
</dbReference>
<dbReference type="Gene3D" id="3.20.20.70">
    <property type="entry name" value="Aldolase class I"/>
    <property type="match status" value="1"/>
</dbReference>
<dbReference type="HAMAP" id="MF_01656">
    <property type="entry name" value="HOA"/>
    <property type="match status" value="1"/>
</dbReference>
<dbReference type="InterPro" id="IPR050073">
    <property type="entry name" value="2-IPM_HCS-like"/>
</dbReference>
<dbReference type="InterPro" id="IPR017629">
    <property type="entry name" value="4OH_2_O-val_aldolase"/>
</dbReference>
<dbReference type="InterPro" id="IPR013785">
    <property type="entry name" value="Aldolase_TIM"/>
</dbReference>
<dbReference type="InterPro" id="IPR012425">
    <property type="entry name" value="DmpG_comm"/>
</dbReference>
<dbReference type="InterPro" id="IPR035685">
    <property type="entry name" value="DRE_TIM_HOA"/>
</dbReference>
<dbReference type="InterPro" id="IPR000891">
    <property type="entry name" value="PYR_CT"/>
</dbReference>
<dbReference type="NCBIfam" id="TIGR03217">
    <property type="entry name" value="4OH_2_O_val_ald"/>
    <property type="match status" value="1"/>
</dbReference>
<dbReference type="NCBIfam" id="NF006049">
    <property type="entry name" value="PRK08195.1"/>
    <property type="match status" value="1"/>
</dbReference>
<dbReference type="PANTHER" id="PTHR10277:SF9">
    <property type="entry name" value="2-ISOPROPYLMALATE SYNTHASE 1, CHLOROPLASTIC-RELATED"/>
    <property type="match status" value="1"/>
</dbReference>
<dbReference type="PANTHER" id="PTHR10277">
    <property type="entry name" value="HOMOCITRATE SYNTHASE-RELATED"/>
    <property type="match status" value="1"/>
</dbReference>
<dbReference type="Pfam" id="PF07836">
    <property type="entry name" value="DmpG_comm"/>
    <property type="match status" value="1"/>
</dbReference>
<dbReference type="Pfam" id="PF00682">
    <property type="entry name" value="HMGL-like"/>
    <property type="match status" value="1"/>
</dbReference>
<dbReference type="SUPFAM" id="SSF51569">
    <property type="entry name" value="Aldolase"/>
    <property type="match status" value="1"/>
</dbReference>
<dbReference type="SUPFAM" id="SSF89000">
    <property type="entry name" value="post-HMGL domain-like"/>
    <property type="match status" value="1"/>
</dbReference>
<dbReference type="PROSITE" id="PS50991">
    <property type="entry name" value="PYR_CT"/>
    <property type="match status" value="1"/>
</dbReference>
<reference key="1">
    <citation type="submission" date="2005-03" db="EMBL/GenBank/DDBJ databases">
        <title>Brevibacillus brevis strain 47, complete genome.</title>
        <authorList>
            <person name="Hosoyama A."/>
            <person name="Yamada R."/>
            <person name="Hongo Y."/>
            <person name="Terui Y."/>
            <person name="Ankai A."/>
            <person name="Masuyama W."/>
            <person name="Sekiguchi M."/>
            <person name="Takeda T."/>
            <person name="Asano K."/>
            <person name="Ohji S."/>
            <person name="Ichikawa N."/>
            <person name="Narita S."/>
            <person name="Aoki N."/>
            <person name="Miura H."/>
            <person name="Matsushita S."/>
            <person name="Sekigawa T."/>
            <person name="Yamagata H."/>
            <person name="Yoshikawa H."/>
            <person name="Udaka S."/>
            <person name="Tanikawa S."/>
            <person name="Fujita N."/>
        </authorList>
    </citation>
    <scope>NUCLEOTIDE SEQUENCE [LARGE SCALE GENOMIC DNA]</scope>
    <source>
        <strain>47 / JCM 6285 / NBRC 100599</strain>
    </source>
</reference>
<feature type="chain" id="PRO_0000387793" description="4-hydroxy-2-oxovalerate aldolase">
    <location>
        <begin position="1"/>
        <end position="340"/>
    </location>
</feature>
<feature type="domain" description="Pyruvate carboxyltransferase" evidence="1">
    <location>
        <begin position="5"/>
        <end position="255"/>
    </location>
</feature>
<feature type="active site" description="Proton acceptor" evidence="1">
    <location>
        <position position="17"/>
    </location>
</feature>
<feature type="binding site" evidence="1">
    <location>
        <begin position="13"/>
        <end position="14"/>
    </location>
    <ligand>
        <name>substrate</name>
    </ligand>
</feature>
<feature type="binding site" evidence="1">
    <location>
        <position position="14"/>
    </location>
    <ligand>
        <name>Mn(2+)</name>
        <dbReference type="ChEBI" id="CHEBI:29035"/>
    </ligand>
</feature>
<feature type="binding site" evidence="1">
    <location>
        <position position="167"/>
    </location>
    <ligand>
        <name>substrate</name>
    </ligand>
</feature>
<feature type="binding site" evidence="1">
    <location>
        <position position="194"/>
    </location>
    <ligand>
        <name>Mn(2+)</name>
        <dbReference type="ChEBI" id="CHEBI:29035"/>
    </ligand>
</feature>
<feature type="binding site" evidence="1">
    <location>
        <position position="194"/>
    </location>
    <ligand>
        <name>substrate</name>
    </ligand>
</feature>
<feature type="binding site" evidence="1">
    <location>
        <position position="196"/>
    </location>
    <ligand>
        <name>Mn(2+)</name>
        <dbReference type="ChEBI" id="CHEBI:29035"/>
    </ligand>
</feature>
<feature type="binding site" evidence="1">
    <location>
        <position position="285"/>
    </location>
    <ligand>
        <name>substrate</name>
    </ligand>
</feature>
<feature type="site" description="Transition state stabilizer" evidence="1">
    <location>
        <position position="13"/>
    </location>
</feature>
<protein>
    <recommendedName>
        <fullName evidence="1">4-hydroxy-2-oxovalerate aldolase</fullName>
        <shortName evidence="1">HOA</shortName>
        <ecNumber evidence="1">4.1.3.39</ecNumber>
    </recommendedName>
    <alternativeName>
        <fullName evidence="1">4-hydroxy-2-keto-pentanoic acid aldolase</fullName>
    </alternativeName>
    <alternativeName>
        <fullName evidence="1">4-hydroxy-2-oxopentanoate aldolase</fullName>
    </alternativeName>
</protein>
<sequence>MTRDIVITEVALRDGSHAINHQFTVEQVVEVASALDEANVPYIEVSHGDGLAGSSLQYGLSRTPELELIEAAVSVCKQAKVGVLLLPGIGTIKDLKTAAALGVGMARIATHATEADVSAQHIYQAKELGLTTAGFLMMAHMAAPEKLAEQARLMQSYGADVVYIVDSAGALLPDQAGERVRALKQCLHVPVGFHAHNNLSLAMANTLVAIQEGATWIDGSVRCLGAGAGNTQTEVLLAVLDRMGIQTGVDLYKMMDLAEDIVSPILQVPQEITRDALVLGYAGVYSSFRLHAERAARKFGIDSRDILIELGRRKVVGGQEDMIVDVAAEIAQRYSSTKIR</sequence>
<organism>
    <name type="scientific">Brevibacillus brevis (strain 47 / JCM 6285 / NBRC 100599)</name>
    <dbReference type="NCBI Taxonomy" id="358681"/>
    <lineage>
        <taxon>Bacteria</taxon>
        <taxon>Bacillati</taxon>
        <taxon>Bacillota</taxon>
        <taxon>Bacilli</taxon>
        <taxon>Bacillales</taxon>
        <taxon>Paenibacillaceae</taxon>
        <taxon>Brevibacillus</taxon>
    </lineage>
</organism>
<proteinExistence type="inferred from homology"/>
<comment type="catalytic activity">
    <reaction evidence="1">
        <text>(S)-4-hydroxy-2-oxopentanoate = acetaldehyde + pyruvate</text>
        <dbReference type="Rhea" id="RHEA:22624"/>
        <dbReference type="ChEBI" id="CHEBI:15343"/>
        <dbReference type="ChEBI" id="CHEBI:15361"/>
        <dbReference type="ChEBI" id="CHEBI:73143"/>
        <dbReference type="EC" id="4.1.3.39"/>
    </reaction>
</comment>
<comment type="similarity">
    <text evidence="1">Belongs to the 4-hydroxy-2-oxovalerate aldolase family.</text>
</comment>
<gene>
    <name type="ordered locus">BBR47_29780</name>
</gene>
<evidence type="ECO:0000255" key="1">
    <source>
        <dbReference type="HAMAP-Rule" id="MF_01656"/>
    </source>
</evidence>
<keyword id="KW-0058">Aromatic hydrocarbons catabolism</keyword>
<keyword id="KW-0456">Lyase</keyword>
<keyword id="KW-0464">Manganese</keyword>
<keyword id="KW-0479">Metal-binding</keyword>
<keyword id="KW-1185">Reference proteome</keyword>
<accession>C0ZDU6</accession>